<comment type="function">
    <text evidence="1">Catalyzes the conversion of 4-hydroxy-tetrahydrodipicolinate (HTPA) to tetrahydrodipicolinate.</text>
</comment>
<comment type="catalytic activity">
    <reaction>
        <text>(S)-2,3,4,5-tetrahydrodipicolinate + NAD(+) + H2O = (2S,4S)-4-hydroxy-2,3,4,5-tetrahydrodipicolinate + NADH + H(+)</text>
        <dbReference type="Rhea" id="RHEA:35323"/>
        <dbReference type="ChEBI" id="CHEBI:15377"/>
        <dbReference type="ChEBI" id="CHEBI:15378"/>
        <dbReference type="ChEBI" id="CHEBI:16845"/>
        <dbReference type="ChEBI" id="CHEBI:57540"/>
        <dbReference type="ChEBI" id="CHEBI:57945"/>
        <dbReference type="ChEBI" id="CHEBI:67139"/>
        <dbReference type="EC" id="1.17.1.8"/>
    </reaction>
</comment>
<comment type="catalytic activity">
    <reaction>
        <text>(S)-2,3,4,5-tetrahydrodipicolinate + NADP(+) + H2O = (2S,4S)-4-hydroxy-2,3,4,5-tetrahydrodipicolinate + NADPH + H(+)</text>
        <dbReference type="Rhea" id="RHEA:35331"/>
        <dbReference type="ChEBI" id="CHEBI:15377"/>
        <dbReference type="ChEBI" id="CHEBI:15378"/>
        <dbReference type="ChEBI" id="CHEBI:16845"/>
        <dbReference type="ChEBI" id="CHEBI:57783"/>
        <dbReference type="ChEBI" id="CHEBI:58349"/>
        <dbReference type="ChEBI" id="CHEBI:67139"/>
        <dbReference type="EC" id="1.17.1.8"/>
    </reaction>
</comment>
<comment type="pathway">
    <text>Amino-acid biosynthesis; L-lysine biosynthesis via DAP pathway; (S)-tetrahydrodipicolinate from L-aspartate: step 4/4.</text>
</comment>
<comment type="subcellular location">
    <subcellularLocation>
        <location evidence="1">Cytoplasm</location>
    </subcellularLocation>
</comment>
<comment type="similarity">
    <text evidence="2">Belongs to the DapB family.</text>
</comment>
<comment type="caution">
    <text evidence="2">Was originally thought to be a dihydrodipicolinate reductase (DHDPR), catalyzing the conversion of dihydrodipicolinate to tetrahydrodipicolinate. However, it was shown in E.coli that the substrate of the enzymatic reaction is not dihydrodipicolinate (DHDP) but in fact (2S,4S)-4-hydroxy-2,3,4,5-tetrahydrodipicolinic acid (HTPA), the product released by the DapA-catalyzed reaction.</text>
</comment>
<comment type="sequence caution" evidence="2">
    <conflict type="frameshift">
        <sequence resource="EMBL-CDS" id="CAA10958"/>
    </conflict>
</comment>
<keyword id="KW-0028">Amino-acid biosynthesis</keyword>
<keyword id="KW-0963">Cytoplasm</keyword>
<keyword id="KW-0220">Diaminopimelate biosynthesis</keyword>
<keyword id="KW-0457">Lysine biosynthesis</keyword>
<keyword id="KW-0520">NAD</keyword>
<keyword id="KW-0521">NADP</keyword>
<keyword id="KW-0560">Oxidoreductase</keyword>
<keyword id="KW-0614">Plasmid</keyword>
<gene>
    <name type="primary">dapB</name>
</gene>
<feature type="chain" id="PRO_0000141477" description="4-hydroxy-tetrahydrodipicolinate reductase">
    <location>
        <begin position="1"/>
        <end position="242" status="greater than"/>
    </location>
</feature>
<feature type="active site" description="Proton donor/acceptor" evidence="1">
    <location>
        <position position="157"/>
    </location>
</feature>
<feature type="active site" description="Proton donor" evidence="1">
    <location>
        <position position="161"/>
    </location>
</feature>
<feature type="binding site" evidence="1">
    <location>
        <begin position="10"/>
        <end position="15"/>
    </location>
    <ligand>
        <name>NAD(+)</name>
        <dbReference type="ChEBI" id="CHEBI:57540"/>
    </ligand>
</feature>
<feature type="binding site" evidence="1">
    <location>
        <position position="36"/>
    </location>
    <ligand>
        <name>NAD(+)</name>
        <dbReference type="ChEBI" id="CHEBI:57540"/>
    </ligand>
</feature>
<feature type="binding site" evidence="1">
    <location>
        <position position="37"/>
    </location>
    <ligand>
        <name>NADP(+)</name>
        <dbReference type="ChEBI" id="CHEBI:58349"/>
    </ligand>
</feature>
<feature type="binding site" evidence="1">
    <location>
        <begin position="100"/>
        <end position="102"/>
    </location>
    <ligand>
        <name>NAD(+)</name>
        <dbReference type="ChEBI" id="CHEBI:57540"/>
    </ligand>
</feature>
<feature type="binding site" evidence="1">
    <location>
        <begin position="124"/>
        <end position="127"/>
    </location>
    <ligand>
        <name>NAD(+)</name>
        <dbReference type="ChEBI" id="CHEBI:57540"/>
    </ligand>
</feature>
<feature type="binding site" evidence="1">
    <location>
        <position position="158"/>
    </location>
    <ligand>
        <name>(S)-2,3,4,5-tetrahydrodipicolinate</name>
        <dbReference type="ChEBI" id="CHEBI:16845"/>
    </ligand>
</feature>
<feature type="non-terminal residue">
    <location>
        <position position="242"/>
    </location>
</feature>
<evidence type="ECO:0000250" key="1"/>
<evidence type="ECO:0000305" key="2"/>
<organism>
    <name type="scientific">Rhizobium meliloti</name>
    <name type="common">Ensifer meliloti</name>
    <name type="synonym">Sinorhizobium meliloti</name>
    <dbReference type="NCBI Taxonomy" id="382"/>
    <lineage>
        <taxon>Bacteria</taxon>
        <taxon>Pseudomonadati</taxon>
        <taxon>Pseudomonadota</taxon>
        <taxon>Alphaproteobacteria</taxon>
        <taxon>Hyphomicrobiales</taxon>
        <taxon>Rhizobiaceae</taxon>
        <taxon>Sinorhizobium/Ensifer group</taxon>
        <taxon>Sinorhizobium</taxon>
    </lineage>
</organism>
<accession>O69783</accession>
<sequence>MSQMRLVVVGAAGRMGRTLIKAIAENPGCMLSGAVERPGSAAVGQDAGFVAGMASCGVLVTDEPGSAFAEADGVLDFTTPDATAEYSSLAAQVGIVHVVGTTGMEPVHFSKLVRAARTIPVVQSGNMSLGVNILAALVQKVAAILDKEWDIEVLEMHHRMKVDAPSGAALLLGEAAASGRQTILSDHYVAGRDGYTGCRTVGTIGFAPCAGXVVGDHKVVFAGAGXRIELSHIAEDRSLFAQ</sequence>
<geneLocation type="plasmid">
    <name>pRmeGR4b</name>
</geneLocation>
<reference key="1">
    <citation type="journal article" date="2000" name="Arch. Microbiol.">
        <title>Characterization of the Sinorhizobium meliloti genes encoding a functional dihydrodipicolinate synthase (dapA) and dihydrodipicolinate reductase (dapB).</title>
        <authorList>
            <person name="Garcia-Rodriguez F.M."/>
            <person name="Zekri S."/>
            <person name="Toro N."/>
        </authorList>
    </citation>
    <scope>NUCLEOTIDE SEQUENCE [GENOMIC DNA]</scope>
    <source>
        <strain>GR4</strain>
    </source>
</reference>
<dbReference type="EC" id="1.17.1.8"/>
<dbReference type="EMBL" id="AJ222715">
    <property type="protein sequence ID" value="CAA10958.1"/>
    <property type="status" value="ALT_FRAME"/>
    <property type="molecule type" value="Genomic_DNA"/>
</dbReference>
<dbReference type="UniPathway" id="UPA00034">
    <property type="reaction ID" value="UER00018"/>
</dbReference>
<dbReference type="GO" id="GO:0005829">
    <property type="term" value="C:cytosol"/>
    <property type="evidence" value="ECO:0007669"/>
    <property type="project" value="TreeGrafter"/>
</dbReference>
<dbReference type="GO" id="GO:0008839">
    <property type="term" value="F:4-hydroxy-tetrahydrodipicolinate reductase"/>
    <property type="evidence" value="ECO:0007669"/>
    <property type="project" value="UniProtKB-EC"/>
</dbReference>
<dbReference type="GO" id="GO:0019877">
    <property type="term" value="P:diaminopimelate biosynthetic process"/>
    <property type="evidence" value="ECO:0007669"/>
    <property type="project" value="UniProtKB-KW"/>
</dbReference>
<dbReference type="GO" id="GO:0009089">
    <property type="term" value="P:lysine biosynthetic process via diaminopimelate"/>
    <property type="evidence" value="ECO:0007669"/>
    <property type="project" value="UniProtKB-UniPathway"/>
</dbReference>
<dbReference type="CDD" id="cd02274">
    <property type="entry name" value="DHDPR_N"/>
    <property type="match status" value="1"/>
</dbReference>
<dbReference type="Gene3D" id="3.30.360.10">
    <property type="entry name" value="Dihydrodipicolinate Reductase, domain 2"/>
    <property type="match status" value="1"/>
</dbReference>
<dbReference type="Gene3D" id="3.40.50.720">
    <property type="entry name" value="NAD(P)-binding Rossmann-like Domain"/>
    <property type="match status" value="1"/>
</dbReference>
<dbReference type="InterPro" id="IPR022663">
    <property type="entry name" value="DapB_C"/>
</dbReference>
<dbReference type="InterPro" id="IPR000846">
    <property type="entry name" value="DapB_N"/>
</dbReference>
<dbReference type="InterPro" id="IPR022664">
    <property type="entry name" value="DapB_N_CS"/>
</dbReference>
<dbReference type="InterPro" id="IPR023940">
    <property type="entry name" value="DHDPR_bac"/>
</dbReference>
<dbReference type="InterPro" id="IPR036291">
    <property type="entry name" value="NAD(P)-bd_dom_sf"/>
</dbReference>
<dbReference type="NCBIfam" id="TIGR00036">
    <property type="entry name" value="dapB"/>
    <property type="match status" value="1"/>
</dbReference>
<dbReference type="PANTHER" id="PTHR20836:SF0">
    <property type="entry name" value="4-HYDROXY-TETRAHYDRODIPICOLINATE REDUCTASE 1, CHLOROPLASTIC-RELATED"/>
    <property type="match status" value="1"/>
</dbReference>
<dbReference type="PANTHER" id="PTHR20836">
    <property type="entry name" value="DIHYDRODIPICOLINATE REDUCTASE"/>
    <property type="match status" value="1"/>
</dbReference>
<dbReference type="Pfam" id="PF05173">
    <property type="entry name" value="DapB_C"/>
    <property type="match status" value="1"/>
</dbReference>
<dbReference type="Pfam" id="PF01113">
    <property type="entry name" value="DapB_N"/>
    <property type="match status" value="1"/>
</dbReference>
<dbReference type="PIRSF" id="PIRSF000161">
    <property type="entry name" value="DHPR"/>
    <property type="match status" value="1"/>
</dbReference>
<dbReference type="SUPFAM" id="SSF55347">
    <property type="entry name" value="Glyceraldehyde-3-phosphate dehydrogenase-like, C-terminal domain"/>
    <property type="match status" value="1"/>
</dbReference>
<dbReference type="SUPFAM" id="SSF51735">
    <property type="entry name" value="NAD(P)-binding Rossmann-fold domains"/>
    <property type="match status" value="1"/>
</dbReference>
<dbReference type="PROSITE" id="PS01298">
    <property type="entry name" value="DAPB"/>
    <property type="match status" value="1"/>
</dbReference>
<protein>
    <recommendedName>
        <fullName>4-hydroxy-tetrahydrodipicolinate reductase</fullName>
        <shortName>HTPA reductase</shortName>
        <ecNumber>1.17.1.8</ecNumber>
    </recommendedName>
</protein>
<proteinExistence type="inferred from homology"/>
<name>DAPB_RHIML</name>